<protein>
    <recommendedName>
        <fullName>Gene 27 protein</fullName>
    </recommendedName>
</protein>
<accession>P06228</accession>
<accession>Q38590</accession>
<organismHost>
    <name type="scientific">Bacillus subtilis</name>
    <dbReference type="NCBI Taxonomy" id="1423"/>
</organismHost>
<name>GP27_BPSP1</name>
<keyword id="KW-0235">DNA replication</keyword>
<keyword id="KW-0804">Transcription</keyword>
<keyword id="KW-0805">Transcription regulation</keyword>
<organism>
    <name type="scientific">Bacillus phage SP01</name>
    <name type="common">Bacteriophage SP01</name>
    <dbReference type="NCBI Taxonomy" id="2884427"/>
    <lineage>
        <taxon>Viruses</taxon>
        <taxon>Duplodnaviria</taxon>
        <taxon>Heunggongvirae</taxon>
        <taxon>Uroviricota</taxon>
        <taxon>Caudoviricetes</taxon>
        <taxon>Herelleviridae</taxon>
        <taxon>Spounavirinae</taxon>
        <taxon>Okubovirus</taxon>
        <taxon>Okubovirus SPO1</taxon>
    </lineage>
</organism>
<feature type="chain" id="PRO_0000106140" description="Gene 27 protein">
    <location>
        <begin position="1"/>
        <end position="155"/>
    </location>
</feature>
<feature type="region of interest" description="Disordered" evidence="1">
    <location>
        <begin position="41"/>
        <end position="114"/>
    </location>
</feature>
<feature type="compositionally biased region" description="Basic and acidic residues" evidence="1">
    <location>
        <begin position="55"/>
        <end position="68"/>
    </location>
</feature>
<feature type="compositionally biased region" description="Basic and acidic residues" evidence="1">
    <location>
        <begin position="78"/>
        <end position="95"/>
    </location>
</feature>
<sequence>MSITAMDAKLQRILEESTCFGIGHDPNVKECKMCDVREQCKAKTQGMNVPTPTRKKPEDVAPAKEKPTTKKTTAKKSTAKEEKKETAPKAKETKAKPKSKPKKAKAPENPNLPNFKEMSFEELVELAKERNVEWKDYNSPNITRMRLIMALKASY</sequence>
<gene>
    <name type="primary">27</name>
</gene>
<dbReference type="EMBL" id="K01137">
    <property type="protein sequence ID" value="AAA32598.1"/>
    <property type="molecule type" value="Genomic_DNA"/>
</dbReference>
<dbReference type="EMBL" id="V01375">
    <property type="protein sequence ID" value="CAA24663.1"/>
    <property type="molecule type" value="Genomic_DNA"/>
</dbReference>
<dbReference type="RefSeq" id="YP_002300399.1">
    <property type="nucleotide sequence ID" value="NC_011421.1"/>
</dbReference>
<dbReference type="SMR" id="P06228"/>
<dbReference type="GeneID" id="7009117"/>
<dbReference type="KEGG" id="vg:7009117"/>
<dbReference type="GO" id="GO:0006260">
    <property type="term" value="P:DNA replication"/>
    <property type="evidence" value="ECO:0007669"/>
    <property type="project" value="UniProtKB-KW"/>
</dbReference>
<comment type="function">
    <text>Required for late gene transcription and DNA replication.</text>
</comment>
<evidence type="ECO:0000256" key="1">
    <source>
        <dbReference type="SAM" id="MobiDB-lite"/>
    </source>
</evidence>
<reference key="1">
    <citation type="journal article" date="1983" name="J. Virol.">
        <title>Bacteriophage SPO1 gene 27: location and nucleotide sequence.</title>
        <authorList>
            <person name="Costanzo M."/>
            <person name="Hannett N."/>
            <person name="Brzustowicz L."/>
            <person name="Pero J."/>
        </authorList>
    </citation>
    <scope>NUCLEOTIDE SEQUENCE [GENOMIC DNA]</scope>
</reference>
<reference key="2">
    <citation type="journal article" date="1983" name="Proc. Natl. Acad. Sci. U.S.A.">
        <title>Structure of a Bacillus subtilis bacteriophage SPO1 gene encoding RNA polymerase sigma factor.</title>
        <authorList>
            <person name="Costanzo M."/>
            <person name="Pero J."/>
        </authorList>
    </citation>
    <scope>NUCLEOTIDE SEQUENCE [GENOMIC DNA] OF 1-11</scope>
</reference>
<proteinExistence type="predicted"/>